<feature type="chain" id="PRO_1000136928" description="Cell division protein ZapD">
    <location>
        <begin position="1"/>
        <end position="251"/>
    </location>
</feature>
<comment type="function">
    <text evidence="1">Cell division factor that enhances FtsZ-ring assembly. Directly interacts with FtsZ and promotes bundling of FtsZ protofilaments, with a reduction in FtsZ GTPase activity.</text>
</comment>
<comment type="subunit">
    <text evidence="1">Interacts with FtsZ.</text>
</comment>
<comment type="subcellular location">
    <subcellularLocation>
        <location evidence="1">Cytoplasm</location>
    </subcellularLocation>
    <text evidence="1">Localizes to mid-cell in an FtsZ-dependent manner.</text>
</comment>
<comment type="similarity">
    <text evidence="1">Belongs to the ZapD family.</text>
</comment>
<dbReference type="EMBL" id="CP001025">
    <property type="protein sequence ID" value="ACB62999.1"/>
    <property type="molecule type" value="Genomic_DNA"/>
</dbReference>
<dbReference type="RefSeq" id="WP_006754990.1">
    <property type="nucleotide sequence ID" value="NC_010551.1"/>
</dbReference>
<dbReference type="SMR" id="B1YST8"/>
<dbReference type="GeneID" id="93084106"/>
<dbReference type="KEGG" id="bac:BamMC406_0502"/>
<dbReference type="HOGENOM" id="CLU_076303_0_1_4"/>
<dbReference type="OrthoDB" id="5294622at2"/>
<dbReference type="Proteomes" id="UP000001680">
    <property type="component" value="Chromosome 1"/>
</dbReference>
<dbReference type="GO" id="GO:0032153">
    <property type="term" value="C:cell division site"/>
    <property type="evidence" value="ECO:0007669"/>
    <property type="project" value="TreeGrafter"/>
</dbReference>
<dbReference type="GO" id="GO:0005737">
    <property type="term" value="C:cytoplasm"/>
    <property type="evidence" value="ECO:0007669"/>
    <property type="project" value="UniProtKB-SubCell"/>
</dbReference>
<dbReference type="GO" id="GO:0000917">
    <property type="term" value="P:division septum assembly"/>
    <property type="evidence" value="ECO:0007669"/>
    <property type="project" value="UniProtKB-KW"/>
</dbReference>
<dbReference type="GO" id="GO:0043093">
    <property type="term" value="P:FtsZ-dependent cytokinesis"/>
    <property type="evidence" value="ECO:0007669"/>
    <property type="project" value="UniProtKB-UniRule"/>
</dbReference>
<dbReference type="Gene3D" id="1.10.3900.10">
    <property type="entry name" value="YacF-like"/>
    <property type="match status" value="1"/>
</dbReference>
<dbReference type="Gene3D" id="2.60.440.10">
    <property type="entry name" value="YacF-like domains"/>
    <property type="match status" value="1"/>
</dbReference>
<dbReference type="HAMAP" id="MF_01092">
    <property type="entry name" value="ZapD"/>
    <property type="match status" value="1"/>
</dbReference>
<dbReference type="InterPro" id="IPR009777">
    <property type="entry name" value="ZapD"/>
</dbReference>
<dbReference type="InterPro" id="IPR027462">
    <property type="entry name" value="ZapD_C"/>
</dbReference>
<dbReference type="InterPro" id="IPR036268">
    <property type="entry name" value="ZapD_sf"/>
</dbReference>
<dbReference type="NCBIfam" id="NF003656">
    <property type="entry name" value="PRK05287.1-4"/>
    <property type="match status" value="1"/>
</dbReference>
<dbReference type="PANTHER" id="PTHR39455">
    <property type="entry name" value="CELL DIVISION PROTEIN ZAPD"/>
    <property type="match status" value="1"/>
</dbReference>
<dbReference type="PANTHER" id="PTHR39455:SF1">
    <property type="entry name" value="CELL DIVISION PROTEIN ZAPD"/>
    <property type="match status" value="1"/>
</dbReference>
<dbReference type="Pfam" id="PF07072">
    <property type="entry name" value="ZapD"/>
    <property type="match status" value="1"/>
</dbReference>
<dbReference type="SUPFAM" id="SSF160950">
    <property type="entry name" value="YacF-like"/>
    <property type="match status" value="1"/>
</dbReference>
<proteinExistence type="inferred from homology"/>
<evidence type="ECO:0000255" key="1">
    <source>
        <dbReference type="HAMAP-Rule" id="MF_01092"/>
    </source>
</evidence>
<reference key="1">
    <citation type="submission" date="2008-04" db="EMBL/GenBank/DDBJ databases">
        <title>Complete sequence of chromosome 1 of Burkholderia ambifaria MC40-6.</title>
        <authorList>
            <person name="Copeland A."/>
            <person name="Lucas S."/>
            <person name="Lapidus A."/>
            <person name="Glavina del Rio T."/>
            <person name="Dalin E."/>
            <person name="Tice H."/>
            <person name="Pitluck S."/>
            <person name="Chain P."/>
            <person name="Malfatti S."/>
            <person name="Shin M."/>
            <person name="Vergez L."/>
            <person name="Lang D."/>
            <person name="Schmutz J."/>
            <person name="Larimer F."/>
            <person name="Land M."/>
            <person name="Hauser L."/>
            <person name="Kyrpides N."/>
            <person name="Lykidis A."/>
            <person name="Ramette A."/>
            <person name="Konstantinidis K."/>
            <person name="Tiedje J."/>
            <person name="Richardson P."/>
        </authorList>
    </citation>
    <scope>NUCLEOTIDE SEQUENCE [LARGE SCALE GENOMIC DNA]</scope>
    <source>
        <strain>MC40-6</strain>
    </source>
</reference>
<gene>
    <name evidence="1" type="primary">zapD</name>
    <name type="ordered locus">BamMC406_0502</name>
</gene>
<protein>
    <recommendedName>
        <fullName evidence="1">Cell division protein ZapD</fullName>
    </recommendedName>
    <alternativeName>
        <fullName evidence="1">Z ring-associated protein D</fullName>
    </alternativeName>
</protein>
<keyword id="KW-0131">Cell cycle</keyword>
<keyword id="KW-0132">Cell division</keyword>
<keyword id="KW-0963">Cytoplasm</keyword>
<keyword id="KW-0717">Septation</keyword>
<organism>
    <name type="scientific">Burkholderia ambifaria (strain MC40-6)</name>
    <dbReference type="NCBI Taxonomy" id="398577"/>
    <lineage>
        <taxon>Bacteria</taxon>
        <taxon>Pseudomonadati</taxon>
        <taxon>Pseudomonadota</taxon>
        <taxon>Betaproteobacteria</taxon>
        <taxon>Burkholderiales</taxon>
        <taxon>Burkholderiaceae</taxon>
        <taxon>Burkholderia</taxon>
        <taxon>Burkholderia cepacia complex</taxon>
    </lineage>
</organism>
<name>ZAPD_BURA4</name>
<accession>B1YST8</accession>
<sequence length="251" mass="28916">MILYEYPFNERIRTLLRLEDLFERFAFFLAQEDPREHHVALTTLFEIAEVTGRADLKSDLMKELERQRQTLAPFRGNPGIEQNALEAVLGEIEQTLANLAQMQGKTGQHLVDNEWLASIRSRAVIPGGTCKFDLPSYYAWQQWPAEQRRQDIAKWIMPLLPLRDAAAIVLRLARESGQASKVMAMQGSYQQMLSGRSYQLMQVRVPPELRVIPEASANKYMLWVRFTMQDGDVRPRAVDIDVPFHLTLCNL</sequence>